<evidence type="ECO:0000255" key="1">
    <source>
        <dbReference type="PROSITE-ProRule" id="PRU00042"/>
    </source>
</evidence>
<evidence type="ECO:0000305" key="2"/>
<dbReference type="EMBL" id="AC139769">
    <property type="status" value="NOT_ANNOTATED_CDS"/>
    <property type="molecule type" value="Genomic_DNA"/>
</dbReference>
<dbReference type="EMBL" id="M88376">
    <property type="protein sequence ID" value="AAA61334.1"/>
    <property type="molecule type" value="Genomic_DNA"/>
</dbReference>
<dbReference type="PIR" id="A45194">
    <property type="entry name" value="A45194"/>
</dbReference>
<dbReference type="SMR" id="Q15940"/>
<dbReference type="BioMuta" id="HGNC:13136"/>
<dbReference type="DMDM" id="190485807"/>
<dbReference type="PeptideAtlas" id="Q15940"/>
<dbReference type="AGR" id="HGNC:13136"/>
<dbReference type="GeneCards" id="ZNF726P1"/>
<dbReference type="HGNC" id="HGNC:13136">
    <property type="gene designation" value="ZNF726P1"/>
</dbReference>
<dbReference type="neXtProt" id="NX_Q15940"/>
<dbReference type="InParanoid" id="Q15940"/>
<dbReference type="PAN-GO" id="Q15940">
    <property type="GO annotations" value="4 GO annotations based on evolutionary models"/>
</dbReference>
<dbReference type="PhylomeDB" id="Q15940"/>
<dbReference type="PathwayCommons" id="Q15940"/>
<dbReference type="Reactome" id="R-HSA-212436">
    <property type="pathway name" value="Generic Transcription Pathway"/>
</dbReference>
<dbReference type="Pharos" id="Q15940">
    <property type="development level" value="Tdark"/>
</dbReference>
<dbReference type="Proteomes" id="UP000005640">
    <property type="component" value="Unplaced"/>
</dbReference>
<dbReference type="RNAct" id="Q15940">
    <property type="molecule type" value="protein"/>
</dbReference>
<dbReference type="GO" id="GO:0005634">
    <property type="term" value="C:nucleus"/>
    <property type="evidence" value="ECO:0000318"/>
    <property type="project" value="GO_Central"/>
</dbReference>
<dbReference type="GO" id="GO:0000981">
    <property type="term" value="F:DNA-binding transcription factor activity, RNA polymerase II-specific"/>
    <property type="evidence" value="ECO:0000318"/>
    <property type="project" value="GO_Central"/>
</dbReference>
<dbReference type="GO" id="GO:0000978">
    <property type="term" value="F:RNA polymerase II cis-regulatory region sequence-specific DNA binding"/>
    <property type="evidence" value="ECO:0000318"/>
    <property type="project" value="GO_Central"/>
</dbReference>
<dbReference type="GO" id="GO:0008270">
    <property type="term" value="F:zinc ion binding"/>
    <property type="evidence" value="ECO:0007669"/>
    <property type="project" value="UniProtKB-KW"/>
</dbReference>
<dbReference type="GO" id="GO:0006357">
    <property type="term" value="P:regulation of transcription by RNA polymerase II"/>
    <property type="evidence" value="ECO:0000318"/>
    <property type="project" value="GO_Central"/>
</dbReference>
<dbReference type="FunFam" id="3.30.160.60:FF:001737">
    <property type="entry name" value="Zinc finger protein 100"/>
    <property type="match status" value="1"/>
</dbReference>
<dbReference type="FunFam" id="3.30.160.60:FF:000206">
    <property type="entry name" value="zinc finger protein 202 isoform X1"/>
    <property type="match status" value="1"/>
</dbReference>
<dbReference type="FunFam" id="3.30.160.60:FF:001868">
    <property type="entry name" value="Zinc finger protein 264"/>
    <property type="match status" value="1"/>
</dbReference>
<dbReference type="FunFam" id="3.30.160.60:FF:000672">
    <property type="entry name" value="Zinc finger protein 430"/>
    <property type="match status" value="1"/>
</dbReference>
<dbReference type="FunFam" id="3.30.160.60:FF:000362">
    <property type="entry name" value="Zinc finger protein 606"/>
    <property type="match status" value="2"/>
</dbReference>
<dbReference type="Gene3D" id="3.30.160.60">
    <property type="entry name" value="Classic Zinc Finger"/>
    <property type="match status" value="6"/>
</dbReference>
<dbReference type="InterPro" id="IPR036236">
    <property type="entry name" value="Znf_C2H2_sf"/>
</dbReference>
<dbReference type="InterPro" id="IPR013087">
    <property type="entry name" value="Znf_C2H2_type"/>
</dbReference>
<dbReference type="PANTHER" id="PTHR23226:SF313">
    <property type="entry name" value="C2H2-TYPE DOMAIN-CONTAINING PROTEIN-RELATED"/>
    <property type="match status" value="1"/>
</dbReference>
<dbReference type="PANTHER" id="PTHR23226">
    <property type="entry name" value="ZINC FINGER AND SCAN DOMAIN-CONTAINING"/>
    <property type="match status" value="1"/>
</dbReference>
<dbReference type="Pfam" id="PF00096">
    <property type="entry name" value="zf-C2H2"/>
    <property type="match status" value="4"/>
</dbReference>
<dbReference type="SMART" id="SM00355">
    <property type="entry name" value="ZnF_C2H2"/>
    <property type="match status" value="6"/>
</dbReference>
<dbReference type="SUPFAM" id="SSF57667">
    <property type="entry name" value="beta-beta-alpha zinc fingers"/>
    <property type="match status" value="3"/>
</dbReference>
<dbReference type="PROSITE" id="PS00028">
    <property type="entry name" value="ZINC_FINGER_C2H2_1"/>
    <property type="match status" value="2"/>
</dbReference>
<dbReference type="PROSITE" id="PS50157">
    <property type="entry name" value="ZINC_FINGER_C2H2_2"/>
    <property type="match status" value="6"/>
</dbReference>
<keyword id="KW-0479">Metal-binding</keyword>
<keyword id="KW-1185">Reference proteome</keyword>
<keyword id="KW-0677">Repeat</keyword>
<keyword id="KW-0862">Zinc</keyword>
<keyword id="KW-0863">Zinc-finger</keyword>
<reference key="1">
    <citation type="journal article" date="2004" name="Nature">
        <title>The DNA sequence and biology of human chromosome 19.</title>
        <authorList>
            <person name="Grimwood J."/>
            <person name="Gordon L.A."/>
            <person name="Olsen A.S."/>
            <person name="Terry A."/>
            <person name="Schmutz J."/>
            <person name="Lamerdin J.E."/>
            <person name="Hellsten U."/>
            <person name="Goodstein D."/>
            <person name="Couronne O."/>
            <person name="Tran-Gyamfi M."/>
            <person name="Aerts A."/>
            <person name="Altherr M."/>
            <person name="Ashworth L."/>
            <person name="Bajorek E."/>
            <person name="Black S."/>
            <person name="Branscomb E."/>
            <person name="Caenepeel S."/>
            <person name="Carrano A.V."/>
            <person name="Caoile C."/>
            <person name="Chan Y.M."/>
            <person name="Christensen M."/>
            <person name="Cleland C.A."/>
            <person name="Copeland A."/>
            <person name="Dalin E."/>
            <person name="Dehal P."/>
            <person name="Denys M."/>
            <person name="Detter J.C."/>
            <person name="Escobar J."/>
            <person name="Flowers D."/>
            <person name="Fotopulos D."/>
            <person name="Garcia C."/>
            <person name="Georgescu A.M."/>
            <person name="Glavina T."/>
            <person name="Gomez M."/>
            <person name="Gonzales E."/>
            <person name="Groza M."/>
            <person name="Hammon N."/>
            <person name="Hawkins T."/>
            <person name="Haydu L."/>
            <person name="Ho I."/>
            <person name="Huang W."/>
            <person name="Israni S."/>
            <person name="Jett J."/>
            <person name="Kadner K."/>
            <person name="Kimball H."/>
            <person name="Kobayashi A."/>
            <person name="Larionov V."/>
            <person name="Leem S.-H."/>
            <person name="Lopez F."/>
            <person name="Lou Y."/>
            <person name="Lowry S."/>
            <person name="Malfatti S."/>
            <person name="Martinez D."/>
            <person name="McCready P.M."/>
            <person name="Medina C."/>
            <person name="Morgan J."/>
            <person name="Nelson K."/>
            <person name="Nolan M."/>
            <person name="Ovcharenko I."/>
            <person name="Pitluck S."/>
            <person name="Pollard M."/>
            <person name="Popkie A.P."/>
            <person name="Predki P."/>
            <person name="Quan G."/>
            <person name="Ramirez L."/>
            <person name="Rash S."/>
            <person name="Retterer J."/>
            <person name="Rodriguez A."/>
            <person name="Rogers S."/>
            <person name="Salamov A."/>
            <person name="Salazar A."/>
            <person name="She X."/>
            <person name="Smith D."/>
            <person name="Slezak T."/>
            <person name="Solovyev V."/>
            <person name="Thayer N."/>
            <person name="Tice H."/>
            <person name="Tsai M."/>
            <person name="Ustaszewska A."/>
            <person name="Vo N."/>
            <person name="Wagner M."/>
            <person name="Wheeler J."/>
            <person name="Wu K."/>
            <person name="Xie G."/>
            <person name="Yang J."/>
            <person name="Dubchak I."/>
            <person name="Furey T.S."/>
            <person name="DeJong P."/>
            <person name="Dickson M."/>
            <person name="Gordon D."/>
            <person name="Eichler E.E."/>
            <person name="Pennacchio L.A."/>
            <person name="Richardson P."/>
            <person name="Stubbs L."/>
            <person name="Rokhsar D.S."/>
            <person name="Myers R.M."/>
            <person name="Rubin E.M."/>
            <person name="Lucas S.M."/>
        </authorList>
    </citation>
    <scope>NUCLEOTIDE SEQUENCE [LARGE SCALE GENOMIC DNA]</scope>
</reference>
<reference key="2">
    <citation type="journal article" date="1992" name="Genomics">
        <title>Clustering of C2-H2 zinc finger motif sequences within telomeric and fragile site regions of human chromosomes.</title>
        <authorList>
            <person name="Lichter P."/>
            <person name="Bray P."/>
            <person name="Ried T."/>
            <person name="Dawid I.B."/>
            <person name="Ward D.C."/>
        </authorList>
    </citation>
    <scope>NUCLEOTIDE SEQUENCE [GENOMIC DNA] OF 123-185</scope>
    <source>
        <tissue>Placenta</tissue>
    </source>
</reference>
<organism>
    <name type="scientific">Homo sapiens</name>
    <name type="common">Human</name>
    <dbReference type="NCBI Taxonomy" id="9606"/>
    <lineage>
        <taxon>Eukaryota</taxon>
        <taxon>Metazoa</taxon>
        <taxon>Chordata</taxon>
        <taxon>Craniata</taxon>
        <taxon>Vertebrata</taxon>
        <taxon>Euteleostomi</taxon>
        <taxon>Mammalia</taxon>
        <taxon>Eutheria</taxon>
        <taxon>Euarchontoglires</taxon>
        <taxon>Primates</taxon>
        <taxon>Haplorrhini</taxon>
        <taxon>Catarrhini</taxon>
        <taxon>Hominidae</taxon>
        <taxon>Homo</taxon>
    </lineage>
</organism>
<protein>
    <recommendedName>
        <fullName>Putative zinc finger protein 726P1</fullName>
    </recommendedName>
</protein>
<accession>Q15940</accession>
<proteinExistence type="uncertain"/>
<feature type="chain" id="PRO_0000338630" description="Putative zinc finger protein 726P1">
    <location>
        <begin position="1"/>
        <end position="193"/>
    </location>
</feature>
<feature type="zinc finger region" description="C2H2-type 1; degenerate" evidence="1">
    <location>
        <begin position="18"/>
        <end position="40"/>
    </location>
</feature>
<feature type="zinc finger region" description="C2H2-type 2; atypical" evidence="1">
    <location>
        <begin position="46"/>
        <end position="68"/>
    </location>
</feature>
<feature type="zinc finger region" description="C2H2-type 3; degenerate" evidence="1">
    <location>
        <begin position="74"/>
        <end position="96"/>
    </location>
</feature>
<feature type="zinc finger region" description="C2H2-type 4" evidence="1">
    <location>
        <begin position="102"/>
        <end position="124"/>
    </location>
</feature>
<feature type="zinc finger region" description="C2H2-type 5; degenerate" evidence="1">
    <location>
        <begin position="130"/>
        <end position="152"/>
    </location>
</feature>
<feature type="zinc finger region" description="C2H2-type 6" evidence="1">
    <location>
        <begin position="158"/>
        <end position="180"/>
    </location>
</feature>
<gene>
    <name type="primary">ZNF726P1</name>
    <name type="synonym">ZNF67</name>
    <name type="synonym">ZNF67P</name>
</gene>
<name>ZNF67_HUMAN</name>
<comment type="caution">
    <text evidence="2">Could be the product of a pseudogene.</text>
</comment>
<sequence>MLSHKTQHKSIYTREKSYKCKKCGKTFNWSSILTNNKKIHTEQKPYKCEECGKAFKQHSTLTTHKIICAEEKLYRCEECGKAFCQPSTLTRYKRMHRRKKLYKCEECGKAFTQFSTLTKHKRIHTRGKHYKCEESGKAFIWSSGLTEHRRVHTRQKPYKCEECGKALIQFSTLTRHKRIHTGEKPNKSMWQTF</sequence>